<reference key="1">
    <citation type="journal article" date="1995" name="Arch. Biochem. Biophys.">
        <title>Molecular cloning and sequence analysis of cDNAs for metalloproteinases from broad-banded copperhead Agkistrodon contortrix laticinctus.</title>
        <authorList>
            <person name="Selistre de Araujo H.S."/>
            <person name="Ownby C.L."/>
        </authorList>
    </citation>
    <scope>NUCLEOTIDE SEQUENCE [MRNA]</scope>
    <source>
        <tissue>Venom gland</tissue>
    </source>
</reference>
<reference key="2">
    <citation type="journal article" date="2010" name="Toxicon">
        <title>Molecular cloning and characterization of cDNAs encoding metalloproteinases from snake venom glands.</title>
        <authorList>
            <person name="Jia Y."/>
            <person name="Perez J.C."/>
        </authorList>
    </citation>
    <scope>NUCLEOTIDE SEQUENCE [MRNA]</scope>
    <source>
        <tissue>Venom gland</tissue>
    </source>
</reference>
<reference key="3">
    <citation type="journal article" date="2000" name="Protein Expr. Purif.">
        <title>Expression, refolding, and activity of a recombinant nonhemorrhagic snake venom metalloprotease.</title>
        <authorList>
            <person name="Selistre de Araujo H.S."/>
            <person name="de Souza E.L."/>
            <person name="Beltramini L.M."/>
            <person name="Ownby C.L."/>
            <person name="Souza D.H.F."/>
        </authorList>
    </citation>
    <scope>FUNCTION</scope>
    <scope>ACTIVITY REGULATION</scope>
</reference>
<reference key="4">
    <citation type="journal article" date="2003" name="Protein Expr. Purif.">
        <title>Expression, refolding, and in vitro activation of a recombinant snake venom pro-metalloprotease.</title>
        <authorList>
            <person name="Ramos O.H.P."/>
            <person name="Carmona A.K."/>
            <person name="Selistre de Araujo H.S."/>
        </authorList>
    </citation>
    <scope>FUNCTION</scope>
    <scope>CATALYTIC ACTIVITY</scope>
    <scope>ACTIVITY REGULATION</scope>
</reference>
<accession>Q92031</accession>
<accession>C9E1R5</accession>
<gene>
    <name type="primary">ACLPREF</name>
</gene>
<protein>
    <recommendedName>
        <fullName>Snake venom metalloproteinase ACLF</fullName>
        <shortName>SVMP</shortName>
        <ecNumber>3.4.24.-</ecNumber>
    </recommendedName>
    <alternativeName>
        <fullName>ACLF-I</fullName>
    </alternativeName>
    <alternativeName>
        <fullName>Metalloproteinase VMP-I</fullName>
        <shortName>AclVMP-I</shortName>
    </alternativeName>
</protein>
<comment type="function">
    <text evidence="5 6">Snake venom zinc metalloprotease that has fibrinolytic activity. The recombinant enzyme cleaves both alpha- and beta-chains of fibrinogen, but not the gamma-chain. The recombinant protein does not produce hemorrhage in mice. Cleaves the peptide substrate Abz-LVEALYQ-EDDnp at the Ala-Leu bond in vitro (PubMed:12651104).</text>
</comment>
<comment type="cofactor">
    <cofactor evidence="1">
        <name>Zn(2+)</name>
        <dbReference type="ChEBI" id="CHEBI:29105"/>
    </cofactor>
    <text evidence="1">Binds 1 zinc ion per subunit.</text>
</comment>
<comment type="activity regulation">
    <text evidence="5 6">Inhibited by EDTA and 1,10-phenanthroline, but not by PMSF.</text>
</comment>
<comment type="subunit">
    <text evidence="1">Monomer.</text>
</comment>
<comment type="subcellular location">
    <subcellularLocation>
        <location evidence="1">Secreted</location>
    </subcellularLocation>
</comment>
<comment type="tissue specificity">
    <text>Expressed by the venom gland.</text>
</comment>
<comment type="similarity">
    <text evidence="7">Belongs to the venom metalloproteinase (M12B) family. P-I subfamily.</text>
</comment>
<name>VM1A_AGKCL</name>
<organism>
    <name type="scientific">Agkistrodon contortrix laticinctus</name>
    <name type="common">Broad-banded copperhead</name>
    <name type="synonym">Agkistrodon mokasen laticinctus</name>
    <dbReference type="NCBI Taxonomy" id="2782196"/>
    <lineage>
        <taxon>Eukaryota</taxon>
        <taxon>Metazoa</taxon>
        <taxon>Chordata</taxon>
        <taxon>Craniata</taxon>
        <taxon>Vertebrata</taxon>
        <taxon>Euteleostomi</taxon>
        <taxon>Lepidosauria</taxon>
        <taxon>Squamata</taxon>
        <taxon>Bifurcata</taxon>
        <taxon>Unidentata</taxon>
        <taxon>Episquamata</taxon>
        <taxon>Toxicofera</taxon>
        <taxon>Serpentes</taxon>
        <taxon>Colubroidea</taxon>
        <taxon>Viperidae</taxon>
        <taxon>Crotalinae</taxon>
        <taxon>Agkistrodon</taxon>
    </lineage>
</organism>
<dbReference type="EC" id="3.4.24.-"/>
<dbReference type="EMBL" id="U18233">
    <property type="protein sequence ID" value="AAC59703.1"/>
    <property type="molecule type" value="mRNA"/>
</dbReference>
<dbReference type="EMBL" id="GQ451436">
    <property type="protein sequence ID" value="ACV83930.1"/>
    <property type="molecule type" value="mRNA"/>
</dbReference>
<dbReference type="PIR" id="S66259">
    <property type="entry name" value="HYSNFA"/>
</dbReference>
<dbReference type="SMR" id="Q92031"/>
<dbReference type="MEROPS" id="M12.133"/>
<dbReference type="GO" id="GO:0005576">
    <property type="term" value="C:extracellular region"/>
    <property type="evidence" value="ECO:0007669"/>
    <property type="project" value="UniProtKB-SubCell"/>
</dbReference>
<dbReference type="GO" id="GO:0005886">
    <property type="term" value="C:plasma membrane"/>
    <property type="evidence" value="ECO:0007669"/>
    <property type="project" value="TreeGrafter"/>
</dbReference>
<dbReference type="GO" id="GO:0046872">
    <property type="term" value="F:metal ion binding"/>
    <property type="evidence" value="ECO:0007669"/>
    <property type="project" value="UniProtKB-KW"/>
</dbReference>
<dbReference type="GO" id="GO:0004222">
    <property type="term" value="F:metalloendopeptidase activity"/>
    <property type="evidence" value="ECO:0007669"/>
    <property type="project" value="InterPro"/>
</dbReference>
<dbReference type="GO" id="GO:0090729">
    <property type="term" value="F:toxin activity"/>
    <property type="evidence" value="ECO:0007669"/>
    <property type="project" value="UniProtKB-KW"/>
</dbReference>
<dbReference type="GO" id="GO:0006508">
    <property type="term" value="P:proteolysis"/>
    <property type="evidence" value="ECO:0007669"/>
    <property type="project" value="UniProtKB-KW"/>
</dbReference>
<dbReference type="CDD" id="cd04269">
    <property type="entry name" value="ZnMc_adamalysin_II_like"/>
    <property type="match status" value="1"/>
</dbReference>
<dbReference type="FunFam" id="3.40.390.10:FF:000002">
    <property type="entry name" value="Disintegrin and metalloproteinase domain-containing protein 22"/>
    <property type="match status" value="1"/>
</dbReference>
<dbReference type="Gene3D" id="3.40.390.10">
    <property type="entry name" value="Collagenase (Catalytic Domain)"/>
    <property type="match status" value="1"/>
</dbReference>
<dbReference type="InterPro" id="IPR024079">
    <property type="entry name" value="MetalloPept_cat_dom_sf"/>
</dbReference>
<dbReference type="InterPro" id="IPR001590">
    <property type="entry name" value="Peptidase_M12B"/>
</dbReference>
<dbReference type="InterPro" id="IPR002870">
    <property type="entry name" value="Peptidase_M12B_N"/>
</dbReference>
<dbReference type="InterPro" id="IPR034027">
    <property type="entry name" value="Reprolysin_adamalysin"/>
</dbReference>
<dbReference type="PANTHER" id="PTHR11905">
    <property type="entry name" value="ADAM A DISINTEGRIN AND METALLOPROTEASE DOMAIN"/>
    <property type="match status" value="1"/>
</dbReference>
<dbReference type="PANTHER" id="PTHR11905:SF32">
    <property type="entry name" value="DISINTEGRIN AND METALLOPROTEINASE DOMAIN-CONTAINING PROTEIN 28"/>
    <property type="match status" value="1"/>
</dbReference>
<dbReference type="Pfam" id="PF01562">
    <property type="entry name" value="Pep_M12B_propep"/>
    <property type="match status" value="1"/>
</dbReference>
<dbReference type="Pfam" id="PF01421">
    <property type="entry name" value="Reprolysin"/>
    <property type="match status" value="1"/>
</dbReference>
<dbReference type="SUPFAM" id="SSF55486">
    <property type="entry name" value="Metalloproteases ('zincins'), catalytic domain"/>
    <property type="match status" value="1"/>
</dbReference>
<dbReference type="PROSITE" id="PS50215">
    <property type="entry name" value="ADAM_MEPRO"/>
    <property type="match status" value="1"/>
</dbReference>
<dbReference type="PROSITE" id="PS00142">
    <property type="entry name" value="ZINC_PROTEASE"/>
    <property type="match status" value="1"/>
</dbReference>
<proteinExistence type="evidence at protein level"/>
<sequence length="411" mass="46231">MIQVLLVTLCLAAFPYQGSSIILESGNVNDYEVVYPRKVTPVPRGAVQPKYEDAMQYEFKVNGEPVVLHLEKNKGLFSEDYSETHYSPDGREITTYPLVEDHCYYHGRIENDADSTASISACNGLKGHFKLQGEMYLIEPLELSDSEAHAVYKYENVEKEDEAPKMCGVTQNWESYEPIKKAFQLNLTPEQQGFPQRYVELVIVADHRMNTKYNGDSDKIRQWVHQIVNTINEIYRPLNIRFALVGLEIWSNQDLITVTSVSHDTLASFGNWRETDLLRRQRHDNAQLLTAIDFDGDTVGLAYVGGMCQLKHSTGVIQDHSAINLLVALTMAHELGHNLGMNHDGNQCHCGANSCVMPSVLSDQPSKLFSDCSKKDYQTFLPVNNPQCILNKPLRTDTASTPVSGNELLEA</sequence>
<feature type="signal peptide" evidence="2">
    <location>
        <begin position="1"/>
        <end position="20"/>
    </location>
</feature>
<feature type="propeptide" id="PRO_5000144379" evidence="1">
    <location>
        <begin position="21"/>
        <end position="189"/>
    </location>
</feature>
<feature type="chain" id="PRO_5000144380" description="Snake venom metalloproteinase ACLF">
    <location>
        <begin position="190"/>
        <end position="411"/>
    </location>
</feature>
<feature type="domain" description="Peptidase M12B" evidence="3">
    <location>
        <begin position="197"/>
        <end position="393"/>
    </location>
</feature>
<feature type="active site" evidence="3 4">
    <location>
        <position position="334"/>
    </location>
</feature>
<feature type="binding site" evidence="1">
    <location>
        <position position="200"/>
    </location>
    <ligand>
        <name>Ca(2+)</name>
        <dbReference type="ChEBI" id="CHEBI:29108"/>
        <label>1</label>
    </ligand>
</feature>
<feature type="binding site" evidence="1">
    <location>
        <position position="284"/>
    </location>
    <ligand>
        <name>Ca(2+)</name>
        <dbReference type="ChEBI" id="CHEBI:29108"/>
        <label>1</label>
    </ligand>
</feature>
<feature type="binding site" evidence="1">
    <location>
        <position position="333"/>
    </location>
    <ligand>
        <name>Zn(2+)</name>
        <dbReference type="ChEBI" id="CHEBI:29105"/>
        <note>catalytic</note>
    </ligand>
</feature>
<feature type="binding site" evidence="1">
    <location>
        <position position="337"/>
    </location>
    <ligand>
        <name>Zn(2+)</name>
        <dbReference type="ChEBI" id="CHEBI:29105"/>
        <note>catalytic</note>
    </ligand>
</feature>
<feature type="binding site" evidence="1">
    <location>
        <position position="343"/>
    </location>
    <ligand>
        <name>Zn(2+)</name>
        <dbReference type="ChEBI" id="CHEBI:29105"/>
        <note>catalytic</note>
    </ligand>
</feature>
<feature type="binding site" evidence="1">
    <location>
        <position position="388"/>
    </location>
    <ligand>
        <name>Ca(2+)</name>
        <dbReference type="ChEBI" id="CHEBI:29108"/>
        <label>1</label>
    </ligand>
</feature>
<feature type="binding site" evidence="1">
    <location>
        <position position="391"/>
    </location>
    <ligand>
        <name>Ca(2+)</name>
        <dbReference type="ChEBI" id="CHEBI:29108"/>
        <label>1</label>
    </ligand>
</feature>
<feature type="binding site" evidence="1">
    <location>
        <position position="403"/>
    </location>
    <ligand>
        <name>Ca(2+)</name>
        <dbReference type="ChEBI" id="CHEBI:29108"/>
        <label>2</label>
    </ligand>
</feature>
<feature type="binding site" evidence="1">
    <location>
        <position position="406"/>
    </location>
    <ligand>
        <name>Ca(2+)</name>
        <dbReference type="ChEBI" id="CHEBI:29108"/>
        <label>2</label>
    </ligand>
</feature>
<feature type="binding site" evidence="1">
    <location>
        <position position="408"/>
    </location>
    <ligand>
        <name>Ca(2+)</name>
        <dbReference type="ChEBI" id="CHEBI:29108"/>
        <label>2</label>
    </ligand>
</feature>
<feature type="binding site" evidence="1">
    <location>
        <position position="410"/>
    </location>
    <ligand>
        <name>Ca(2+)</name>
        <dbReference type="ChEBI" id="CHEBI:29108"/>
        <label>2</label>
    </ligand>
</feature>
<feature type="disulfide bond" evidence="3">
    <location>
        <begin position="308"/>
        <end position="388"/>
    </location>
</feature>
<feature type="disulfide bond" evidence="3">
    <location>
        <begin position="348"/>
        <end position="372"/>
    </location>
</feature>
<feature type="disulfide bond" evidence="3">
    <location>
        <begin position="350"/>
        <end position="355"/>
    </location>
</feature>
<feature type="sequence conflict" description="In Ref. 2; ACV83930." evidence="7" ref="2">
    <original>E</original>
    <variation>G</variation>
    <location>
        <position position="200"/>
    </location>
</feature>
<feature type="sequence conflict" description="In Ref. 2; ACV83930." evidence="7" ref="2">
    <original>I</original>
    <variation>T</variation>
    <location>
        <position position="227"/>
    </location>
</feature>
<feature type="sequence conflict" description="In Ref. 2; ACV83930." evidence="7" ref="2">
    <original>Y</original>
    <variation>H</variation>
    <location>
        <position position="303"/>
    </location>
</feature>
<feature type="sequence conflict" description="In Ref. 2; ACV83930." evidence="7" ref="2">
    <original>PS</original>
    <variation>AA</variation>
    <location>
        <begin position="358"/>
        <end position="359"/>
    </location>
</feature>
<feature type="sequence conflict" description="In Ref. 2; ACV83930." evidence="7" ref="2">
    <original>P</original>
    <variation>T</variation>
    <location>
        <position position="382"/>
    </location>
</feature>
<feature type="sequence conflict" description="In Ref. 2; ACV83930." evidence="7" ref="2">
    <original>A</original>
    <variation>V</variation>
    <location>
        <position position="399"/>
    </location>
</feature>
<keyword id="KW-0106">Calcium</keyword>
<keyword id="KW-1015">Disulfide bond</keyword>
<keyword id="KW-1205">Fibrinolytic toxin</keyword>
<keyword id="KW-1199">Hemostasis impairing toxin</keyword>
<keyword id="KW-0378">Hydrolase</keyword>
<keyword id="KW-0479">Metal-binding</keyword>
<keyword id="KW-0482">Metalloprotease</keyword>
<keyword id="KW-0645">Protease</keyword>
<keyword id="KW-0964">Secreted</keyword>
<keyword id="KW-0732">Signal</keyword>
<keyword id="KW-0800">Toxin</keyword>
<keyword id="KW-0862">Zinc</keyword>
<keyword id="KW-0865">Zymogen</keyword>
<evidence type="ECO:0000250" key="1"/>
<evidence type="ECO:0000255" key="2"/>
<evidence type="ECO:0000255" key="3">
    <source>
        <dbReference type="PROSITE-ProRule" id="PRU00276"/>
    </source>
</evidence>
<evidence type="ECO:0000255" key="4">
    <source>
        <dbReference type="PROSITE-ProRule" id="PRU10095"/>
    </source>
</evidence>
<evidence type="ECO:0000269" key="5">
    <source>
    </source>
</evidence>
<evidence type="ECO:0000269" key="6">
    <source>
    </source>
</evidence>
<evidence type="ECO:0000305" key="7"/>